<proteinExistence type="inferred from homology"/>
<protein>
    <recommendedName>
        <fullName evidence="1">Spermidine export protein MdtJ</fullName>
    </recommendedName>
</protein>
<accession>Q5PHJ7</accession>
<dbReference type="EMBL" id="CP000026">
    <property type="protein sequence ID" value="AAV77315.1"/>
    <property type="molecule type" value="Genomic_DNA"/>
</dbReference>
<dbReference type="RefSeq" id="WP_000500279.1">
    <property type="nucleotide sequence ID" value="NC_006511.1"/>
</dbReference>
<dbReference type="SMR" id="Q5PHJ7"/>
<dbReference type="KEGG" id="spt:SPA1372"/>
<dbReference type="HOGENOM" id="CLU_133067_0_0_6"/>
<dbReference type="Proteomes" id="UP000008185">
    <property type="component" value="Chromosome"/>
</dbReference>
<dbReference type="GO" id="GO:0005886">
    <property type="term" value="C:plasma membrane"/>
    <property type="evidence" value="ECO:0007669"/>
    <property type="project" value="UniProtKB-SubCell"/>
</dbReference>
<dbReference type="GO" id="GO:0015199">
    <property type="term" value="F:amino-acid betaine transmembrane transporter activity"/>
    <property type="evidence" value="ECO:0007669"/>
    <property type="project" value="TreeGrafter"/>
</dbReference>
<dbReference type="GO" id="GO:0015297">
    <property type="term" value="F:antiporter activity"/>
    <property type="evidence" value="ECO:0007669"/>
    <property type="project" value="TreeGrafter"/>
</dbReference>
<dbReference type="GO" id="GO:0015220">
    <property type="term" value="F:choline transmembrane transporter activity"/>
    <property type="evidence" value="ECO:0007669"/>
    <property type="project" value="TreeGrafter"/>
</dbReference>
<dbReference type="GO" id="GO:0015606">
    <property type="term" value="F:spermidine transmembrane transporter activity"/>
    <property type="evidence" value="ECO:0007669"/>
    <property type="project" value="UniProtKB-UniRule"/>
</dbReference>
<dbReference type="GO" id="GO:0031460">
    <property type="term" value="P:glycine betaine transport"/>
    <property type="evidence" value="ECO:0007669"/>
    <property type="project" value="TreeGrafter"/>
</dbReference>
<dbReference type="FunFam" id="1.10.3730.20:FF:000001">
    <property type="entry name" value="Quaternary ammonium compound resistance transporter SugE"/>
    <property type="match status" value="1"/>
</dbReference>
<dbReference type="Gene3D" id="1.10.3730.20">
    <property type="match status" value="1"/>
</dbReference>
<dbReference type="HAMAP" id="MF_01598">
    <property type="entry name" value="MdtJ"/>
    <property type="match status" value="1"/>
</dbReference>
<dbReference type="InterPro" id="IPR000390">
    <property type="entry name" value="Small_drug/metabolite_transptr"/>
</dbReference>
<dbReference type="InterPro" id="IPR045324">
    <property type="entry name" value="Small_multidrug_res"/>
</dbReference>
<dbReference type="InterPro" id="IPR023740">
    <property type="entry name" value="Spermidine_export_MdtJ"/>
</dbReference>
<dbReference type="NCBIfam" id="NF007767">
    <property type="entry name" value="PRK10452.1"/>
    <property type="match status" value="1"/>
</dbReference>
<dbReference type="PANTHER" id="PTHR30561">
    <property type="entry name" value="SMR FAMILY PROTON-DEPENDENT DRUG EFFLUX TRANSPORTER SUGE"/>
    <property type="match status" value="1"/>
</dbReference>
<dbReference type="PANTHER" id="PTHR30561:SF2">
    <property type="entry name" value="SPERMIDINE EXPORT PROTEIN MDTJ"/>
    <property type="match status" value="1"/>
</dbReference>
<dbReference type="Pfam" id="PF00893">
    <property type="entry name" value="Multi_Drug_Res"/>
    <property type="match status" value="1"/>
</dbReference>
<dbReference type="SUPFAM" id="SSF103481">
    <property type="entry name" value="Multidrug resistance efflux transporter EmrE"/>
    <property type="match status" value="1"/>
</dbReference>
<name>MDTJ_SALPA</name>
<comment type="function">
    <text evidence="1">Catalyzes the excretion of spermidine.</text>
</comment>
<comment type="subunit">
    <text evidence="1">Forms a complex with MdtI.</text>
</comment>
<comment type="subcellular location">
    <subcellularLocation>
        <location evidence="1">Cell inner membrane</location>
        <topology evidence="1">Multi-pass membrane protein</topology>
    </subcellularLocation>
</comment>
<comment type="similarity">
    <text evidence="1">Belongs to the drug/metabolite transporter (DMT) superfamily. Small multidrug resistance (SMR) (TC 2.A.7.1) family. MdtJ subfamily.</text>
</comment>
<feature type="chain" id="PRO_0000331175" description="Spermidine export protein MdtJ">
    <location>
        <begin position="1"/>
        <end position="120"/>
    </location>
</feature>
<feature type="transmembrane region" description="Helical" evidence="1">
    <location>
        <begin position="1"/>
        <end position="21"/>
    </location>
</feature>
<feature type="transmembrane region" description="Helical" evidence="1">
    <location>
        <begin position="31"/>
        <end position="51"/>
    </location>
</feature>
<feature type="transmembrane region" description="Helical" evidence="1">
    <location>
        <begin position="54"/>
        <end position="74"/>
    </location>
</feature>
<feature type="transmembrane region" description="Helical" evidence="1">
    <location>
        <begin position="81"/>
        <end position="101"/>
    </location>
</feature>
<keyword id="KW-0997">Cell inner membrane</keyword>
<keyword id="KW-1003">Cell membrane</keyword>
<keyword id="KW-0472">Membrane</keyword>
<keyword id="KW-0812">Transmembrane</keyword>
<keyword id="KW-1133">Transmembrane helix</keyword>
<keyword id="KW-0813">Transport</keyword>
<sequence length="120" mass="12813">MFYWILLALAIATEITGTLSMKWASVGNGNAGFILMLVMITLSYIFLSFAVKKIALGVAYALWEGIGILFITIFSVLLFDEALSTMKIAGLLTLVAGIVLIKSGTRKPGKPVKGAARATI</sequence>
<evidence type="ECO:0000255" key="1">
    <source>
        <dbReference type="HAMAP-Rule" id="MF_01598"/>
    </source>
</evidence>
<organism>
    <name type="scientific">Salmonella paratyphi A (strain ATCC 9150 / SARB42)</name>
    <dbReference type="NCBI Taxonomy" id="295319"/>
    <lineage>
        <taxon>Bacteria</taxon>
        <taxon>Pseudomonadati</taxon>
        <taxon>Pseudomonadota</taxon>
        <taxon>Gammaproteobacteria</taxon>
        <taxon>Enterobacterales</taxon>
        <taxon>Enterobacteriaceae</taxon>
        <taxon>Salmonella</taxon>
    </lineage>
</organism>
<reference key="1">
    <citation type="journal article" date="2004" name="Nat. Genet.">
        <title>Comparison of genome degradation in Paratyphi A and Typhi, human-restricted serovars of Salmonella enterica that cause typhoid.</title>
        <authorList>
            <person name="McClelland M."/>
            <person name="Sanderson K.E."/>
            <person name="Clifton S.W."/>
            <person name="Latreille P."/>
            <person name="Porwollik S."/>
            <person name="Sabo A."/>
            <person name="Meyer R."/>
            <person name="Bieri T."/>
            <person name="Ozersky P."/>
            <person name="McLellan M."/>
            <person name="Harkins C.R."/>
            <person name="Wang C."/>
            <person name="Nguyen C."/>
            <person name="Berghoff A."/>
            <person name="Elliott G."/>
            <person name="Kohlberg S."/>
            <person name="Strong C."/>
            <person name="Du F."/>
            <person name="Carter J."/>
            <person name="Kremizki C."/>
            <person name="Layman D."/>
            <person name="Leonard S."/>
            <person name="Sun H."/>
            <person name="Fulton L."/>
            <person name="Nash W."/>
            <person name="Miner T."/>
            <person name="Minx P."/>
            <person name="Delehaunty K."/>
            <person name="Fronick C."/>
            <person name="Magrini V."/>
            <person name="Nhan M."/>
            <person name="Warren W."/>
            <person name="Florea L."/>
            <person name="Spieth J."/>
            <person name="Wilson R.K."/>
        </authorList>
    </citation>
    <scope>NUCLEOTIDE SEQUENCE [LARGE SCALE GENOMIC DNA]</scope>
    <source>
        <strain>ATCC 9150 / SARB42</strain>
    </source>
</reference>
<gene>
    <name evidence="1" type="primary">mdtJ</name>
    <name type="ordered locus">SPA1372</name>
</gene>